<feature type="chain" id="PRO_1000061081" description="Large ribosomal subunit protein eL37">
    <location>
        <begin position="1"/>
        <end position="63"/>
    </location>
</feature>
<feature type="zinc finger region" description="C4-type" evidence="1">
    <location>
        <begin position="20"/>
        <end position="38"/>
    </location>
</feature>
<feature type="binding site" evidence="1">
    <location>
        <position position="20"/>
    </location>
    <ligand>
        <name>Zn(2+)</name>
        <dbReference type="ChEBI" id="CHEBI:29105"/>
    </ligand>
</feature>
<feature type="binding site" evidence="1">
    <location>
        <position position="23"/>
    </location>
    <ligand>
        <name>Zn(2+)</name>
        <dbReference type="ChEBI" id="CHEBI:29105"/>
    </ligand>
</feature>
<feature type="binding site" evidence="1">
    <location>
        <position position="35"/>
    </location>
    <ligand>
        <name>Zn(2+)</name>
        <dbReference type="ChEBI" id="CHEBI:29105"/>
    </ligand>
</feature>
<feature type="binding site" evidence="1">
    <location>
        <position position="38"/>
    </location>
    <ligand>
        <name>Zn(2+)</name>
        <dbReference type="ChEBI" id="CHEBI:29105"/>
    </ligand>
</feature>
<reference key="1">
    <citation type="journal article" date="2008" name="J. Bacteriol.">
        <title>Genome sequence of Thermofilum pendens reveals an exceptional loss of biosynthetic pathways without genome reduction.</title>
        <authorList>
            <person name="Anderson I."/>
            <person name="Rodriguez J."/>
            <person name="Susanti D."/>
            <person name="Porat I."/>
            <person name="Reich C."/>
            <person name="Ulrich L.E."/>
            <person name="Elkins J.G."/>
            <person name="Mavromatis K."/>
            <person name="Lykidis A."/>
            <person name="Kim E."/>
            <person name="Thompson L.S."/>
            <person name="Nolan M."/>
            <person name="Land M."/>
            <person name="Copeland A."/>
            <person name="Lapidus A."/>
            <person name="Lucas S."/>
            <person name="Detter C."/>
            <person name="Zhulin I.B."/>
            <person name="Olsen G.J."/>
            <person name="Whitman W."/>
            <person name="Mukhopadhyay B."/>
            <person name="Bristow J."/>
            <person name="Kyrpides N."/>
        </authorList>
    </citation>
    <scope>NUCLEOTIDE SEQUENCE [LARGE SCALE GENOMIC DNA]</scope>
    <source>
        <strain>DSM 2475 / Hrk 5</strain>
    </source>
</reference>
<dbReference type="EMBL" id="CP000505">
    <property type="protein sequence ID" value="ABL77829.1"/>
    <property type="molecule type" value="Genomic_DNA"/>
</dbReference>
<dbReference type="RefSeq" id="WP_011752094.1">
    <property type="nucleotide sequence ID" value="NC_008698.1"/>
</dbReference>
<dbReference type="SMR" id="A1RX99"/>
<dbReference type="STRING" id="368408.Tpen_0420"/>
<dbReference type="EnsemblBacteria" id="ABL77829">
    <property type="protein sequence ID" value="ABL77829"/>
    <property type="gene ID" value="Tpen_0420"/>
</dbReference>
<dbReference type="GeneID" id="41582989"/>
<dbReference type="KEGG" id="tpe:Tpen_0420"/>
<dbReference type="eggNOG" id="arCOG04126">
    <property type="taxonomic scope" value="Archaea"/>
</dbReference>
<dbReference type="HOGENOM" id="CLU_208825_0_0_2"/>
<dbReference type="OrthoDB" id="5619at2157"/>
<dbReference type="Proteomes" id="UP000000641">
    <property type="component" value="Chromosome"/>
</dbReference>
<dbReference type="GO" id="GO:0022625">
    <property type="term" value="C:cytosolic large ribosomal subunit"/>
    <property type="evidence" value="ECO:0007669"/>
    <property type="project" value="TreeGrafter"/>
</dbReference>
<dbReference type="GO" id="GO:0019843">
    <property type="term" value="F:rRNA binding"/>
    <property type="evidence" value="ECO:0007669"/>
    <property type="project" value="UniProtKB-KW"/>
</dbReference>
<dbReference type="GO" id="GO:0003735">
    <property type="term" value="F:structural constituent of ribosome"/>
    <property type="evidence" value="ECO:0007669"/>
    <property type="project" value="InterPro"/>
</dbReference>
<dbReference type="GO" id="GO:0008270">
    <property type="term" value="F:zinc ion binding"/>
    <property type="evidence" value="ECO:0007669"/>
    <property type="project" value="UniProtKB-UniRule"/>
</dbReference>
<dbReference type="GO" id="GO:0006412">
    <property type="term" value="P:translation"/>
    <property type="evidence" value="ECO:0007669"/>
    <property type="project" value="UniProtKB-UniRule"/>
</dbReference>
<dbReference type="FunFam" id="2.20.25.30:FF:000003">
    <property type="entry name" value="50S ribosomal protein L37e"/>
    <property type="match status" value="1"/>
</dbReference>
<dbReference type="Gene3D" id="2.20.25.30">
    <property type="match status" value="1"/>
</dbReference>
<dbReference type="HAMAP" id="MF_00547">
    <property type="entry name" value="Ribosomal_eL37"/>
    <property type="match status" value="1"/>
</dbReference>
<dbReference type="InterPro" id="IPR001569">
    <property type="entry name" value="Ribosomal_eL37"/>
</dbReference>
<dbReference type="InterPro" id="IPR011331">
    <property type="entry name" value="Ribosomal_eL37/eL43"/>
</dbReference>
<dbReference type="InterPro" id="IPR018267">
    <property type="entry name" value="Ribosomal_eL37_CS"/>
</dbReference>
<dbReference type="InterPro" id="IPR011332">
    <property type="entry name" value="Ribosomal_zn-bd"/>
</dbReference>
<dbReference type="NCBIfam" id="NF003214">
    <property type="entry name" value="PRK04179.1"/>
    <property type="match status" value="1"/>
</dbReference>
<dbReference type="PANTHER" id="PTHR10768">
    <property type="entry name" value="60S RIBOSOMAL PROTEIN L37"/>
    <property type="match status" value="1"/>
</dbReference>
<dbReference type="PANTHER" id="PTHR10768:SF0">
    <property type="entry name" value="RIBOSOMAL PROTEIN L37"/>
    <property type="match status" value="1"/>
</dbReference>
<dbReference type="Pfam" id="PF01907">
    <property type="entry name" value="Ribosomal_L37e"/>
    <property type="match status" value="1"/>
</dbReference>
<dbReference type="SUPFAM" id="SSF57829">
    <property type="entry name" value="Zn-binding ribosomal proteins"/>
    <property type="match status" value="1"/>
</dbReference>
<dbReference type="PROSITE" id="PS01077">
    <property type="entry name" value="RIBOSOMAL_L37E"/>
    <property type="match status" value="1"/>
</dbReference>
<organism>
    <name type="scientific">Thermofilum pendens (strain DSM 2475 / Hrk 5)</name>
    <dbReference type="NCBI Taxonomy" id="368408"/>
    <lineage>
        <taxon>Archaea</taxon>
        <taxon>Thermoproteota</taxon>
        <taxon>Thermoprotei</taxon>
        <taxon>Thermofilales</taxon>
        <taxon>Thermofilaceae</taxon>
        <taxon>Thermofilum</taxon>
    </lineage>
</organism>
<proteinExistence type="inferred from homology"/>
<keyword id="KW-0479">Metal-binding</keyword>
<keyword id="KW-1185">Reference proteome</keyword>
<keyword id="KW-0687">Ribonucleoprotein</keyword>
<keyword id="KW-0689">Ribosomal protein</keyword>
<keyword id="KW-0694">RNA-binding</keyword>
<keyword id="KW-0699">rRNA-binding</keyword>
<keyword id="KW-0862">Zinc</keyword>
<keyword id="KW-0863">Zinc-finger</keyword>
<gene>
    <name evidence="1" type="primary">rpl37e</name>
    <name type="ordered locus">Tpen_0420</name>
</gene>
<name>RL37_THEPD</name>
<comment type="function">
    <text evidence="1">Binds to the 23S rRNA.</text>
</comment>
<comment type="cofactor">
    <cofactor evidence="1">
        <name>Zn(2+)</name>
        <dbReference type="ChEBI" id="CHEBI:29105"/>
    </cofactor>
    <text evidence="1">Binds 1 zinc ion per subunit.</text>
</comment>
<comment type="similarity">
    <text evidence="1">Belongs to the eukaryotic ribosomal protein eL37 family.</text>
</comment>
<protein>
    <recommendedName>
        <fullName evidence="1">Large ribosomal subunit protein eL37</fullName>
    </recommendedName>
    <alternativeName>
        <fullName evidence="2">50S ribosomal protein L37e</fullName>
    </alternativeName>
</protein>
<accession>A1RX99</accession>
<evidence type="ECO:0000255" key="1">
    <source>
        <dbReference type="HAMAP-Rule" id="MF_00547"/>
    </source>
</evidence>
<evidence type="ECO:0000305" key="2"/>
<sequence>MVKGTTSFGKRGRNITHIRCRRCGHHSFNVRKGYCAHCGFGRSKRIRRYSWQNKKAVTRIRLV</sequence>